<organism>
    <name type="scientific">Methanocaldococcus jannaschii (strain ATCC 43067 / DSM 2661 / JAL-1 / JCM 10045 / NBRC 100440)</name>
    <name type="common">Methanococcus jannaschii</name>
    <dbReference type="NCBI Taxonomy" id="243232"/>
    <lineage>
        <taxon>Archaea</taxon>
        <taxon>Methanobacteriati</taxon>
        <taxon>Methanobacteriota</taxon>
        <taxon>Methanomada group</taxon>
        <taxon>Methanococci</taxon>
        <taxon>Methanococcales</taxon>
        <taxon>Methanocaldococcaceae</taxon>
        <taxon>Methanocaldococcus</taxon>
    </lineage>
</organism>
<gene>
    <name type="ordered locus">MJ0424</name>
</gene>
<keyword id="KW-1185">Reference proteome</keyword>
<dbReference type="EMBL" id="L77117">
    <property type="protein sequence ID" value="AAB98418.1"/>
    <property type="molecule type" value="Genomic_DNA"/>
</dbReference>
<dbReference type="PIR" id="H64352">
    <property type="entry name" value="H64352"/>
</dbReference>
<dbReference type="RefSeq" id="WP_010869923.1">
    <property type="nucleotide sequence ID" value="NC_000909.1"/>
</dbReference>
<dbReference type="SMR" id="Q57867"/>
<dbReference type="STRING" id="243232.MJ_0424"/>
<dbReference type="PaxDb" id="243232-MJ_0424"/>
<dbReference type="EnsemblBacteria" id="AAB98418">
    <property type="protein sequence ID" value="AAB98418"/>
    <property type="gene ID" value="MJ_0424"/>
</dbReference>
<dbReference type="GeneID" id="63606501"/>
<dbReference type="KEGG" id="mja:MJ_0424"/>
<dbReference type="eggNOG" id="arCOG03166">
    <property type="taxonomic scope" value="Archaea"/>
</dbReference>
<dbReference type="HOGENOM" id="CLU_2257381_0_0_2"/>
<dbReference type="InParanoid" id="Q57867"/>
<dbReference type="Proteomes" id="UP000000805">
    <property type="component" value="Chromosome"/>
</dbReference>
<dbReference type="Gene3D" id="3.40.50.300">
    <property type="entry name" value="P-loop containing nucleotide triphosphate hydrolases"/>
    <property type="match status" value="1"/>
</dbReference>
<dbReference type="InterPro" id="IPR027417">
    <property type="entry name" value="P-loop_NTPase"/>
</dbReference>
<dbReference type="PANTHER" id="PTHR34704">
    <property type="entry name" value="ATPASE"/>
    <property type="match status" value="1"/>
</dbReference>
<dbReference type="PANTHER" id="PTHR34704:SF1">
    <property type="entry name" value="ATPASE"/>
    <property type="match status" value="1"/>
</dbReference>
<dbReference type="SUPFAM" id="SSF52540">
    <property type="entry name" value="P-loop containing nucleoside triphosphate hydrolases"/>
    <property type="match status" value="1"/>
</dbReference>
<feature type="chain" id="PRO_0000106869" description="Uncharacterized protein MJ0424">
    <location>
        <begin position="1"/>
        <end position="103"/>
    </location>
</feature>
<name>Y424_METJA</name>
<accession>Q57867</accession>
<sequence>MLTNDSMNENLNELKRVFSSLTGKEYFKNLDVGLVDLFRYLRDEIKDEKVVIALDEFQYLMQLNRGVLSIFQKIWDGILADTKVFLIICGSSCVSKHGRFRDW</sequence>
<reference key="1">
    <citation type="journal article" date="1996" name="Science">
        <title>Complete genome sequence of the methanogenic archaeon, Methanococcus jannaschii.</title>
        <authorList>
            <person name="Bult C.J."/>
            <person name="White O."/>
            <person name="Olsen G.J."/>
            <person name="Zhou L."/>
            <person name="Fleischmann R.D."/>
            <person name="Sutton G.G."/>
            <person name="Blake J.A."/>
            <person name="FitzGerald L.M."/>
            <person name="Clayton R.A."/>
            <person name="Gocayne J.D."/>
            <person name="Kerlavage A.R."/>
            <person name="Dougherty B.A."/>
            <person name="Tomb J.-F."/>
            <person name="Adams M.D."/>
            <person name="Reich C.I."/>
            <person name="Overbeek R."/>
            <person name="Kirkness E.F."/>
            <person name="Weinstock K.G."/>
            <person name="Merrick J.M."/>
            <person name="Glodek A."/>
            <person name="Scott J.L."/>
            <person name="Geoghagen N.S.M."/>
            <person name="Weidman J.F."/>
            <person name="Fuhrmann J.L."/>
            <person name="Nguyen D."/>
            <person name="Utterback T.R."/>
            <person name="Kelley J.M."/>
            <person name="Peterson J.D."/>
            <person name="Sadow P.W."/>
            <person name="Hanna M.C."/>
            <person name="Cotton M.D."/>
            <person name="Roberts K.M."/>
            <person name="Hurst M.A."/>
            <person name="Kaine B.P."/>
            <person name="Borodovsky M."/>
            <person name="Klenk H.-P."/>
            <person name="Fraser C.M."/>
            <person name="Smith H.O."/>
            <person name="Woese C.R."/>
            <person name="Venter J.C."/>
        </authorList>
    </citation>
    <scope>NUCLEOTIDE SEQUENCE [LARGE SCALE GENOMIC DNA]</scope>
    <source>
        <strain>ATCC 43067 / DSM 2661 / JAL-1 / JCM 10045 / NBRC 100440</strain>
    </source>
</reference>
<protein>
    <recommendedName>
        <fullName>Uncharacterized protein MJ0424</fullName>
    </recommendedName>
</protein>
<proteinExistence type="predicted"/>